<feature type="chain" id="PRO_0000228276" description="Holo-[acyl-carrier-protein] synthase">
    <location>
        <begin position="1"/>
        <end position="142"/>
    </location>
</feature>
<feature type="binding site" evidence="1">
    <location>
        <position position="9"/>
    </location>
    <ligand>
        <name>Mg(2+)</name>
        <dbReference type="ChEBI" id="CHEBI:18420"/>
    </ligand>
</feature>
<feature type="binding site" evidence="1">
    <location>
        <position position="63"/>
    </location>
    <ligand>
        <name>Mg(2+)</name>
        <dbReference type="ChEBI" id="CHEBI:18420"/>
    </ligand>
</feature>
<protein>
    <recommendedName>
        <fullName evidence="1">Holo-[acyl-carrier-protein] synthase</fullName>
        <shortName evidence="1">Holo-ACP synthase</shortName>
        <ecNumber evidence="1">2.7.8.7</ecNumber>
    </recommendedName>
    <alternativeName>
        <fullName evidence="1">4'-phosphopantetheinyl transferase AcpS</fullName>
    </alternativeName>
</protein>
<gene>
    <name evidence="1" type="primary">acpS</name>
    <name type="ordered locus">Bcep18194_A4250</name>
</gene>
<dbReference type="EC" id="2.7.8.7" evidence="1"/>
<dbReference type="EMBL" id="CP000151">
    <property type="protein sequence ID" value="ABB07847.1"/>
    <property type="molecule type" value="Genomic_DNA"/>
</dbReference>
<dbReference type="RefSeq" id="WP_011351418.1">
    <property type="nucleotide sequence ID" value="NZ_WNDV01000026.1"/>
</dbReference>
<dbReference type="SMR" id="Q39I69"/>
<dbReference type="GeneID" id="93192615"/>
<dbReference type="KEGG" id="bur:Bcep18194_A4250"/>
<dbReference type="PATRIC" id="fig|482957.22.peg.1142"/>
<dbReference type="HOGENOM" id="CLU_089696_3_1_4"/>
<dbReference type="Proteomes" id="UP000002705">
    <property type="component" value="Chromosome 1"/>
</dbReference>
<dbReference type="GO" id="GO:0005737">
    <property type="term" value="C:cytoplasm"/>
    <property type="evidence" value="ECO:0007669"/>
    <property type="project" value="UniProtKB-SubCell"/>
</dbReference>
<dbReference type="GO" id="GO:0008897">
    <property type="term" value="F:holo-[acyl-carrier-protein] synthase activity"/>
    <property type="evidence" value="ECO:0007669"/>
    <property type="project" value="UniProtKB-UniRule"/>
</dbReference>
<dbReference type="GO" id="GO:0000287">
    <property type="term" value="F:magnesium ion binding"/>
    <property type="evidence" value="ECO:0007669"/>
    <property type="project" value="UniProtKB-UniRule"/>
</dbReference>
<dbReference type="GO" id="GO:0006633">
    <property type="term" value="P:fatty acid biosynthetic process"/>
    <property type="evidence" value="ECO:0007669"/>
    <property type="project" value="UniProtKB-UniRule"/>
</dbReference>
<dbReference type="Gene3D" id="3.90.470.20">
    <property type="entry name" value="4'-phosphopantetheinyl transferase domain"/>
    <property type="match status" value="1"/>
</dbReference>
<dbReference type="HAMAP" id="MF_00101">
    <property type="entry name" value="AcpS"/>
    <property type="match status" value="1"/>
</dbReference>
<dbReference type="InterPro" id="IPR008278">
    <property type="entry name" value="4-PPantetheinyl_Trfase_dom"/>
</dbReference>
<dbReference type="InterPro" id="IPR037143">
    <property type="entry name" value="4-PPantetheinyl_Trfase_dom_sf"/>
</dbReference>
<dbReference type="InterPro" id="IPR002582">
    <property type="entry name" value="ACPS"/>
</dbReference>
<dbReference type="InterPro" id="IPR004568">
    <property type="entry name" value="Ppantetheine-prot_Trfase_dom"/>
</dbReference>
<dbReference type="NCBIfam" id="TIGR00516">
    <property type="entry name" value="acpS"/>
    <property type="match status" value="1"/>
</dbReference>
<dbReference type="NCBIfam" id="TIGR00556">
    <property type="entry name" value="pantethn_trn"/>
    <property type="match status" value="1"/>
</dbReference>
<dbReference type="Pfam" id="PF01648">
    <property type="entry name" value="ACPS"/>
    <property type="match status" value="1"/>
</dbReference>
<dbReference type="SUPFAM" id="SSF56214">
    <property type="entry name" value="4'-phosphopantetheinyl transferase"/>
    <property type="match status" value="1"/>
</dbReference>
<evidence type="ECO:0000255" key="1">
    <source>
        <dbReference type="HAMAP-Rule" id="MF_00101"/>
    </source>
</evidence>
<organism>
    <name type="scientific">Burkholderia lata (strain ATCC 17760 / DSM 23089 / LMG 22485 / NCIMB 9086 / R18194 / 383)</name>
    <dbReference type="NCBI Taxonomy" id="482957"/>
    <lineage>
        <taxon>Bacteria</taxon>
        <taxon>Pseudomonadati</taxon>
        <taxon>Pseudomonadota</taxon>
        <taxon>Betaproteobacteria</taxon>
        <taxon>Burkholderiales</taxon>
        <taxon>Burkholderiaceae</taxon>
        <taxon>Burkholderia</taxon>
        <taxon>Burkholderia cepacia complex</taxon>
    </lineage>
</organism>
<sequence length="142" mass="15332">MAIYGIGTDIAQVSRIAAVLERTGGRFAEKVLGPDELRVFHARRARSEARGIAFLATRFSAKEAFSKAIGLGMHWPMTWRALQTLNHPSGEPYVVASGELADWLAARGITARVTVSDERDYAVSFVVAETDAAPAPVSRTSS</sequence>
<name>ACPS_BURL3</name>
<keyword id="KW-0963">Cytoplasm</keyword>
<keyword id="KW-0275">Fatty acid biosynthesis</keyword>
<keyword id="KW-0276">Fatty acid metabolism</keyword>
<keyword id="KW-0444">Lipid biosynthesis</keyword>
<keyword id="KW-0443">Lipid metabolism</keyword>
<keyword id="KW-0460">Magnesium</keyword>
<keyword id="KW-0479">Metal-binding</keyword>
<keyword id="KW-0808">Transferase</keyword>
<reference key="1">
    <citation type="submission" date="2005-10" db="EMBL/GenBank/DDBJ databases">
        <title>Complete sequence of chromosome 1 of Burkholderia sp. 383.</title>
        <authorList>
            <consortium name="US DOE Joint Genome Institute"/>
            <person name="Copeland A."/>
            <person name="Lucas S."/>
            <person name="Lapidus A."/>
            <person name="Barry K."/>
            <person name="Detter J.C."/>
            <person name="Glavina T."/>
            <person name="Hammon N."/>
            <person name="Israni S."/>
            <person name="Pitluck S."/>
            <person name="Chain P."/>
            <person name="Malfatti S."/>
            <person name="Shin M."/>
            <person name="Vergez L."/>
            <person name="Schmutz J."/>
            <person name="Larimer F."/>
            <person name="Land M."/>
            <person name="Kyrpides N."/>
            <person name="Lykidis A."/>
            <person name="Richardson P."/>
        </authorList>
    </citation>
    <scope>NUCLEOTIDE SEQUENCE [LARGE SCALE GENOMIC DNA]</scope>
    <source>
        <strain>ATCC 17760 / DSM 23089 / LMG 22485 / NCIMB 9086 / R18194 / 383</strain>
    </source>
</reference>
<proteinExistence type="inferred from homology"/>
<accession>Q39I69</accession>
<comment type="function">
    <text evidence="1">Transfers the 4'-phosphopantetheine moiety from coenzyme A to a Ser of acyl-carrier-protein.</text>
</comment>
<comment type="catalytic activity">
    <reaction evidence="1">
        <text>apo-[ACP] + CoA = holo-[ACP] + adenosine 3',5'-bisphosphate + H(+)</text>
        <dbReference type="Rhea" id="RHEA:12068"/>
        <dbReference type="Rhea" id="RHEA-COMP:9685"/>
        <dbReference type="Rhea" id="RHEA-COMP:9690"/>
        <dbReference type="ChEBI" id="CHEBI:15378"/>
        <dbReference type="ChEBI" id="CHEBI:29999"/>
        <dbReference type="ChEBI" id="CHEBI:57287"/>
        <dbReference type="ChEBI" id="CHEBI:58343"/>
        <dbReference type="ChEBI" id="CHEBI:64479"/>
        <dbReference type="EC" id="2.7.8.7"/>
    </reaction>
</comment>
<comment type="cofactor">
    <cofactor evidence="1">
        <name>Mg(2+)</name>
        <dbReference type="ChEBI" id="CHEBI:18420"/>
    </cofactor>
</comment>
<comment type="subcellular location">
    <subcellularLocation>
        <location evidence="1">Cytoplasm</location>
    </subcellularLocation>
</comment>
<comment type="similarity">
    <text evidence="1">Belongs to the P-Pant transferase superfamily. AcpS family.</text>
</comment>